<protein>
    <recommendedName>
        <fullName evidence="1">Ribosomal RNA small subunit methyltransferase A</fullName>
        <ecNumber evidence="1">2.1.1.182</ecNumber>
    </recommendedName>
    <alternativeName>
        <fullName evidence="1">16S rRNA (adenine(1518)-N(6)/adenine(1519)-N(6))-dimethyltransferase</fullName>
    </alternativeName>
    <alternativeName>
        <fullName evidence="1">16S rRNA dimethyladenosine transferase</fullName>
    </alternativeName>
    <alternativeName>
        <fullName evidence="1">16S rRNA dimethylase</fullName>
    </alternativeName>
    <alternativeName>
        <fullName evidence="1">S-adenosylmethionine-6-N', N'-adenosyl(rRNA) dimethyltransferase</fullName>
    </alternativeName>
</protein>
<name>RSMA_SHIB3</name>
<organism>
    <name type="scientific">Shigella boydii serotype 18 (strain CDC 3083-94 / BS512)</name>
    <dbReference type="NCBI Taxonomy" id="344609"/>
    <lineage>
        <taxon>Bacteria</taxon>
        <taxon>Pseudomonadati</taxon>
        <taxon>Pseudomonadota</taxon>
        <taxon>Gammaproteobacteria</taxon>
        <taxon>Enterobacterales</taxon>
        <taxon>Enterobacteriaceae</taxon>
        <taxon>Shigella</taxon>
    </lineage>
</organism>
<accession>B2U259</accession>
<evidence type="ECO:0000255" key="1">
    <source>
        <dbReference type="HAMAP-Rule" id="MF_00607"/>
    </source>
</evidence>
<comment type="function">
    <text evidence="1">Specifically dimethylates two adjacent adenosines (A1518 and A1519) in the loop of a conserved hairpin near the 3'-end of 16S rRNA in the 30S particle. May play a critical role in biogenesis of 30S subunits.</text>
</comment>
<comment type="catalytic activity">
    <reaction evidence="1">
        <text>adenosine(1518)/adenosine(1519) in 16S rRNA + 4 S-adenosyl-L-methionine = N(6)-dimethyladenosine(1518)/N(6)-dimethyladenosine(1519) in 16S rRNA + 4 S-adenosyl-L-homocysteine + 4 H(+)</text>
        <dbReference type="Rhea" id="RHEA:19609"/>
        <dbReference type="Rhea" id="RHEA-COMP:10232"/>
        <dbReference type="Rhea" id="RHEA-COMP:10233"/>
        <dbReference type="ChEBI" id="CHEBI:15378"/>
        <dbReference type="ChEBI" id="CHEBI:57856"/>
        <dbReference type="ChEBI" id="CHEBI:59789"/>
        <dbReference type="ChEBI" id="CHEBI:74411"/>
        <dbReference type="ChEBI" id="CHEBI:74493"/>
        <dbReference type="EC" id="2.1.1.182"/>
    </reaction>
</comment>
<comment type="subcellular location">
    <subcellularLocation>
        <location evidence="1">Cytoplasm</location>
    </subcellularLocation>
</comment>
<comment type="similarity">
    <text evidence="1">Belongs to the class I-like SAM-binding methyltransferase superfamily. rRNA adenine N(6)-methyltransferase family. RsmA subfamily.</text>
</comment>
<reference key="1">
    <citation type="submission" date="2008-05" db="EMBL/GenBank/DDBJ databases">
        <title>Complete sequence of Shigella boydii serotype 18 strain BS512.</title>
        <authorList>
            <person name="Rasko D.A."/>
            <person name="Rosovitz M."/>
            <person name="Maurelli A.T."/>
            <person name="Myers G."/>
            <person name="Seshadri R."/>
            <person name="Cer R."/>
            <person name="Jiang L."/>
            <person name="Ravel J."/>
            <person name="Sebastian Y."/>
        </authorList>
    </citation>
    <scope>NUCLEOTIDE SEQUENCE [LARGE SCALE GENOMIC DNA]</scope>
    <source>
        <strain>CDC 3083-94 / BS512</strain>
    </source>
</reference>
<gene>
    <name evidence="1" type="primary">rsmA</name>
    <name evidence="1" type="synonym">ksgA</name>
    <name type="ordered locus">SbBS512_E0045</name>
</gene>
<dbReference type="EC" id="2.1.1.182" evidence="1"/>
<dbReference type="EMBL" id="CP001063">
    <property type="protein sequence ID" value="ACD09046.1"/>
    <property type="molecule type" value="Genomic_DNA"/>
</dbReference>
<dbReference type="RefSeq" id="WP_001065384.1">
    <property type="nucleotide sequence ID" value="NC_010658.1"/>
</dbReference>
<dbReference type="SMR" id="B2U259"/>
<dbReference type="STRING" id="344609.SbBS512_E0045"/>
<dbReference type="KEGG" id="sbc:SbBS512_E0045"/>
<dbReference type="HOGENOM" id="CLU_041220_0_1_6"/>
<dbReference type="Proteomes" id="UP000001030">
    <property type="component" value="Chromosome"/>
</dbReference>
<dbReference type="GO" id="GO:0005829">
    <property type="term" value="C:cytosol"/>
    <property type="evidence" value="ECO:0007669"/>
    <property type="project" value="TreeGrafter"/>
</dbReference>
<dbReference type="GO" id="GO:0052908">
    <property type="term" value="F:16S rRNA (adenine(1518)-N(6)/adenine(1519)-N(6))-dimethyltransferase activity"/>
    <property type="evidence" value="ECO:0007669"/>
    <property type="project" value="UniProtKB-EC"/>
</dbReference>
<dbReference type="GO" id="GO:0003723">
    <property type="term" value="F:RNA binding"/>
    <property type="evidence" value="ECO:0007669"/>
    <property type="project" value="UniProtKB-KW"/>
</dbReference>
<dbReference type="FunFam" id="1.10.8.100:FF:000001">
    <property type="entry name" value="Ribosomal RNA small subunit methyltransferase A"/>
    <property type="match status" value="1"/>
</dbReference>
<dbReference type="FunFam" id="3.40.50.150:FF:000006">
    <property type="entry name" value="Ribosomal RNA small subunit methyltransferase A"/>
    <property type="match status" value="1"/>
</dbReference>
<dbReference type="Gene3D" id="1.10.8.100">
    <property type="entry name" value="Ribosomal RNA adenine dimethylase-like, domain 2"/>
    <property type="match status" value="1"/>
</dbReference>
<dbReference type="Gene3D" id="3.40.50.150">
    <property type="entry name" value="Vaccinia Virus protein VP39"/>
    <property type="match status" value="1"/>
</dbReference>
<dbReference type="HAMAP" id="MF_00607">
    <property type="entry name" value="16SrRNA_methyltr_A"/>
    <property type="match status" value="1"/>
</dbReference>
<dbReference type="InterPro" id="IPR001737">
    <property type="entry name" value="KsgA/Erm"/>
</dbReference>
<dbReference type="InterPro" id="IPR023165">
    <property type="entry name" value="rRNA_Ade_diMease-like_C"/>
</dbReference>
<dbReference type="InterPro" id="IPR020596">
    <property type="entry name" value="rRNA_Ade_Mease_Trfase_CS"/>
</dbReference>
<dbReference type="InterPro" id="IPR020598">
    <property type="entry name" value="rRNA_Ade_methylase_Trfase_N"/>
</dbReference>
<dbReference type="InterPro" id="IPR011530">
    <property type="entry name" value="rRNA_adenine_dimethylase"/>
</dbReference>
<dbReference type="InterPro" id="IPR029063">
    <property type="entry name" value="SAM-dependent_MTases_sf"/>
</dbReference>
<dbReference type="NCBIfam" id="TIGR00755">
    <property type="entry name" value="ksgA"/>
    <property type="match status" value="1"/>
</dbReference>
<dbReference type="PANTHER" id="PTHR11727">
    <property type="entry name" value="DIMETHYLADENOSINE TRANSFERASE"/>
    <property type="match status" value="1"/>
</dbReference>
<dbReference type="PANTHER" id="PTHR11727:SF7">
    <property type="entry name" value="DIMETHYLADENOSINE TRANSFERASE-RELATED"/>
    <property type="match status" value="1"/>
</dbReference>
<dbReference type="Pfam" id="PF00398">
    <property type="entry name" value="RrnaAD"/>
    <property type="match status" value="1"/>
</dbReference>
<dbReference type="SMART" id="SM00650">
    <property type="entry name" value="rADc"/>
    <property type="match status" value="1"/>
</dbReference>
<dbReference type="SUPFAM" id="SSF53335">
    <property type="entry name" value="S-adenosyl-L-methionine-dependent methyltransferases"/>
    <property type="match status" value="1"/>
</dbReference>
<dbReference type="PROSITE" id="PS01131">
    <property type="entry name" value="RRNA_A_DIMETH"/>
    <property type="match status" value="1"/>
</dbReference>
<dbReference type="PROSITE" id="PS51689">
    <property type="entry name" value="SAM_RNA_A_N6_MT"/>
    <property type="match status" value="1"/>
</dbReference>
<sequence>MNNRVHQGHLARKRFGQNFLNDQFVIDSIVSAINPQKGQAMVEIGPGLAALTEPVGERLDQLTVIELDRDLAARLQTHPFLGPKLTIYQQDAMTFNFGELAEKMGQPLRVFGNLPYNISTPLMFHLFSYTDAIADMHFMLQKEVVNRLVAGPNSKAYGRLSVMAQYYCNVIPVLEVPPSAFTPPPKVDSAVVRLVPHATMPHPVKDVRVLSRITTEAFNQRRKTIRNSLGNLFSVEVLTGMGLDPAMRAENISVAQYCQMANYLAENAPLQES</sequence>
<proteinExistence type="inferred from homology"/>
<feature type="chain" id="PRO_1000130323" description="Ribosomal RNA small subunit methyltransferase A">
    <location>
        <begin position="1"/>
        <end position="273"/>
    </location>
</feature>
<feature type="binding site" evidence="1">
    <location>
        <position position="18"/>
    </location>
    <ligand>
        <name>S-adenosyl-L-methionine</name>
        <dbReference type="ChEBI" id="CHEBI:59789"/>
    </ligand>
</feature>
<feature type="binding site" evidence="1">
    <location>
        <position position="20"/>
    </location>
    <ligand>
        <name>S-adenosyl-L-methionine</name>
        <dbReference type="ChEBI" id="CHEBI:59789"/>
    </ligand>
</feature>
<feature type="binding site" evidence="1">
    <location>
        <position position="45"/>
    </location>
    <ligand>
        <name>S-adenosyl-L-methionine</name>
        <dbReference type="ChEBI" id="CHEBI:59789"/>
    </ligand>
</feature>
<feature type="binding site" evidence="1">
    <location>
        <position position="66"/>
    </location>
    <ligand>
        <name>S-adenosyl-L-methionine</name>
        <dbReference type="ChEBI" id="CHEBI:59789"/>
    </ligand>
</feature>
<feature type="binding site" evidence="1">
    <location>
        <position position="91"/>
    </location>
    <ligand>
        <name>S-adenosyl-L-methionine</name>
        <dbReference type="ChEBI" id="CHEBI:59789"/>
    </ligand>
</feature>
<feature type="binding site" evidence="1">
    <location>
        <position position="113"/>
    </location>
    <ligand>
        <name>S-adenosyl-L-methionine</name>
        <dbReference type="ChEBI" id="CHEBI:59789"/>
    </ligand>
</feature>
<keyword id="KW-0963">Cytoplasm</keyword>
<keyword id="KW-0489">Methyltransferase</keyword>
<keyword id="KW-1185">Reference proteome</keyword>
<keyword id="KW-0694">RNA-binding</keyword>
<keyword id="KW-0698">rRNA processing</keyword>
<keyword id="KW-0949">S-adenosyl-L-methionine</keyword>
<keyword id="KW-0808">Transferase</keyword>